<organism>
    <name type="scientific">Mus musculus</name>
    <name type="common">Mouse</name>
    <dbReference type="NCBI Taxonomy" id="10090"/>
    <lineage>
        <taxon>Eukaryota</taxon>
        <taxon>Metazoa</taxon>
        <taxon>Chordata</taxon>
        <taxon>Craniata</taxon>
        <taxon>Vertebrata</taxon>
        <taxon>Euteleostomi</taxon>
        <taxon>Mammalia</taxon>
        <taxon>Eutheria</taxon>
        <taxon>Euarchontoglires</taxon>
        <taxon>Glires</taxon>
        <taxon>Rodentia</taxon>
        <taxon>Myomorpha</taxon>
        <taxon>Muroidea</taxon>
        <taxon>Muridae</taxon>
        <taxon>Murinae</taxon>
        <taxon>Mus</taxon>
        <taxon>Mus</taxon>
    </lineage>
</organism>
<name>PTN20_MOUSE</name>
<accession>O55082</accession>
<accession>A4QPF6</accession>
<dbReference type="EC" id="3.1.3.48"/>
<dbReference type="EMBL" id="D64141">
    <property type="protein sequence ID" value="BAA23761.1"/>
    <property type="molecule type" value="mRNA"/>
</dbReference>
<dbReference type="EMBL" id="AK029493">
    <property type="protein sequence ID" value="BAC26476.1"/>
    <property type="molecule type" value="mRNA"/>
</dbReference>
<dbReference type="EMBL" id="BC139817">
    <property type="protein sequence ID" value="AAI39818.1"/>
    <property type="molecule type" value="mRNA"/>
</dbReference>
<dbReference type="CCDS" id="CCDS36870.1">
    <molecule id="O55082-1"/>
</dbReference>
<dbReference type="RefSeq" id="NP_033004.1">
    <molecule id="O55082-1"/>
    <property type="nucleotide sequence ID" value="NM_008978.2"/>
</dbReference>
<dbReference type="SMR" id="O55082"/>
<dbReference type="BioGRID" id="202485">
    <property type="interactions" value="2"/>
</dbReference>
<dbReference type="FunCoup" id="O55082">
    <property type="interactions" value="85"/>
</dbReference>
<dbReference type="STRING" id="10090.ENSMUSP00000022508"/>
<dbReference type="iPTMnet" id="O55082"/>
<dbReference type="PhosphoSitePlus" id="O55082"/>
<dbReference type="PaxDb" id="10090-ENSMUSP00000022508"/>
<dbReference type="ProteomicsDB" id="291542">
    <molecule id="O55082-1"/>
</dbReference>
<dbReference type="ProteomicsDB" id="291543">
    <molecule id="O55082-2"/>
</dbReference>
<dbReference type="Antibodypedia" id="66300">
    <property type="antibodies" value="85 antibodies from 17 providers"/>
</dbReference>
<dbReference type="DNASU" id="19256"/>
<dbReference type="Ensembl" id="ENSMUST00000022508.8">
    <molecule id="O55082-1"/>
    <property type="protein sequence ID" value="ENSMUSP00000022508.7"/>
    <property type="gene ID" value="ENSMUSG00000021940.11"/>
</dbReference>
<dbReference type="Ensembl" id="ENSMUST00000226512.2">
    <molecule id="O55082-2"/>
    <property type="protein sequence ID" value="ENSMUSP00000153829.2"/>
    <property type="gene ID" value="ENSMUSG00000021940.11"/>
</dbReference>
<dbReference type="GeneID" id="19256"/>
<dbReference type="KEGG" id="mmu:19256"/>
<dbReference type="UCSC" id="uc007szx.1">
    <molecule id="O55082-1"/>
    <property type="organism name" value="mouse"/>
</dbReference>
<dbReference type="AGR" id="MGI:1196295"/>
<dbReference type="CTD" id="26095"/>
<dbReference type="MGI" id="MGI:1196295">
    <property type="gene designation" value="Ptpn20"/>
</dbReference>
<dbReference type="VEuPathDB" id="HostDB:ENSMUSG00000021940"/>
<dbReference type="eggNOG" id="KOG0789">
    <property type="taxonomic scope" value="Eukaryota"/>
</dbReference>
<dbReference type="GeneTree" id="ENSGT00940000160066"/>
<dbReference type="HOGENOM" id="CLU_001645_9_5_1"/>
<dbReference type="InParanoid" id="O55082"/>
<dbReference type="OMA" id="TQMRKQR"/>
<dbReference type="OrthoDB" id="165498at2759"/>
<dbReference type="PhylomeDB" id="O55082"/>
<dbReference type="TreeFam" id="TF315573"/>
<dbReference type="BioGRID-ORCS" id="19256">
    <property type="hits" value="0 hits in 78 CRISPR screens"/>
</dbReference>
<dbReference type="ChiTaRS" id="Ptpn20">
    <property type="organism name" value="mouse"/>
</dbReference>
<dbReference type="PRO" id="PR:O55082"/>
<dbReference type="Proteomes" id="UP000000589">
    <property type="component" value="Chromosome 14"/>
</dbReference>
<dbReference type="RNAct" id="O55082">
    <property type="molecule type" value="protein"/>
</dbReference>
<dbReference type="Bgee" id="ENSMUSG00000021940">
    <property type="expression patterns" value="Expressed in spermatocyte and 30 other cell types or tissues"/>
</dbReference>
<dbReference type="ExpressionAtlas" id="O55082">
    <property type="expression patterns" value="baseline and differential"/>
</dbReference>
<dbReference type="GO" id="GO:0034451">
    <property type="term" value="C:centriolar satellite"/>
    <property type="evidence" value="ECO:0007669"/>
    <property type="project" value="Ensembl"/>
</dbReference>
<dbReference type="GO" id="GO:0005737">
    <property type="term" value="C:cytoplasm"/>
    <property type="evidence" value="ECO:0007669"/>
    <property type="project" value="UniProtKB-SubCell"/>
</dbReference>
<dbReference type="GO" id="GO:0005874">
    <property type="term" value="C:microtubule"/>
    <property type="evidence" value="ECO:0007669"/>
    <property type="project" value="UniProtKB-KW"/>
</dbReference>
<dbReference type="GO" id="GO:0005634">
    <property type="term" value="C:nucleus"/>
    <property type="evidence" value="ECO:0007669"/>
    <property type="project" value="UniProtKB-SubCell"/>
</dbReference>
<dbReference type="GO" id="GO:0004725">
    <property type="term" value="F:protein tyrosine phosphatase activity"/>
    <property type="evidence" value="ECO:0007669"/>
    <property type="project" value="UniProtKB-EC"/>
</dbReference>
<dbReference type="FunFam" id="3.90.190.10:FF:000102">
    <property type="entry name" value="Receptor-type tyrosine-protein phosphatase"/>
    <property type="match status" value="1"/>
</dbReference>
<dbReference type="Gene3D" id="3.90.190.10">
    <property type="entry name" value="Protein tyrosine phosphatase superfamily"/>
    <property type="match status" value="1"/>
</dbReference>
<dbReference type="InterPro" id="IPR052074">
    <property type="entry name" value="NonRcpt_TyrProt_Phosphatase"/>
</dbReference>
<dbReference type="InterPro" id="IPR029021">
    <property type="entry name" value="Prot-tyrosine_phosphatase-like"/>
</dbReference>
<dbReference type="InterPro" id="IPR000242">
    <property type="entry name" value="PTP_cat"/>
</dbReference>
<dbReference type="InterPro" id="IPR016130">
    <property type="entry name" value="Tyr_Pase_AS"/>
</dbReference>
<dbReference type="InterPro" id="IPR003595">
    <property type="entry name" value="Tyr_Pase_cat"/>
</dbReference>
<dbReference type="InterPro" id="IPR000387">
    <property type="entry name" value="Tyr_Pase_dom"/>
</dbReference>
<dbReference type="PANTHER" id="PTHR46900:SF4">
    <property type="entry name" value="FERM AND PDZ DOMAIN CONTAINING 2"/>
    <property type="match status" value="1"/>
</dbReference>
<dbReference type="PANTHER" id="PTHR46900">
    <property type="entry name" value="TYROSINE-PROTEIN PHOSPHATASE NON-RECEPTOR TYPE 13"/>
    <property type="match status" value="1"/>
</dbReference>
<dbReference type="Pfam" id="PF00102">
    <property type="entry name" value="Y_phosphatase"/>
    <property type="match status" value="1"/>
</dbReference>
<dbReference type="PRINTS" id="PR00700">
    <property type="entry name" value="PRTYPHPHTASE"/>
</dbReference>
<dbReference type="SMART" id="SM00194">
    <property type="entry name" value="PTPc"/>
    <property type="match status" value="1"/>
</dbReference>
<dbReference type="SMART" id="SM00404">
    <property type="entry name" value="PTPc_motif"/>
    <property type="match status" value="1"/>
</dbReference>
<dbReference type="SUPFAM" id="SSF52799">
    <property type="entry name" value="(Phosphotyrosine protein) phosphatases II"/>
    <property type="match status" value="1"/>
</dbReference>
<dbReference type="PROSITE" id="PS00383">
    <property type="entry name" value="TYR_PHOSPHATASE_1"/>
    <property type="match status" value="1"/>
</dbReference>
<dbReference type="PROSITE" id="PS50056">
    <property type="entry name" value="TYR_PHOSPHATASE_2"/>
    <property type="match status" value="1"/>
</dbReference>
<dbReference type="PROSITE" id="PS50055">
    <property type="entry name" value="TYR_PHOSPHATASE_PTP"/>
    <property type="match status" value="1"/>
</dbReference>
<sequence>MSSPRKVRGKTGRDNDEEEGNSGNLNLRNSLPSSSQKMTPTKPIFGNKMNSENVKPSHHLSFSDKYELVYPEPLESDTDETVWDVSDRSLRNRWNSMDSETAGPSKTVSPVLSGSSRLSKDTETSVSEKELTQLAQIRPLIFNSSARSAMRDCLNTLQKKEELDIIREFLELEQMTLPDDFNSGNTLQNRDKNRYRDILPYDSTRVPLGKNKDYINASYIRIVNHEEEYFYIATQGPLPETIEDFWQMVLENNCNVIAMITREIECGVIKCYSYWPISLKEPLEFEHFSVFLETFHVTQYFTVRVFQIVKKSTGKSQCVKHLQFTKWPDHGTPASADFFIKYVRYVRKSHITGPLLVHCSAGVGRTGVFICVDVVFSAIEKNYSFDIMNIVTQMRKQRCGMIQTKEQYQFCYEIVLEVLQNLLALY</sequence>
<reference key="1">
    <citation type="journal article" date="1997" name="J. Biol. Chem.">
        <title>Molecular cloning and characterization of a novel cytoplasmic protein-tyrosine phosphatase that is specifically expressed in spermatocytes.</title>
        <authorList>
            <person name="Ohsugi M."/>
            <person name="Kuramochi S."/>
            <person name="Matsuda S."/>
            <person name="Yamamoto T."/>
        </authorList>
    </citation>
    <scope>NUCLEOTIDE SEQUENCE [MRNA] (ISOFORM 1)</scope>
    <scope>ENZYME ACTIVITY</scope>
    <scope>TISSUE SPECIFICITY</scope>
    <scope>DEVELOPMENTAL STAGE</scope>
    <source>
        <tissue>Testis</tissue>
    </source>
</reference>
<reference key="2">
    <citation type="journal article" date="2005" name="Science">
        <title>The transcriptional landscape of the mammalian genome.</title>
        <authorList>
            <person name="Carninci P."/>
            <person name="Kasukawa T."/>
            <person name="Katayama S."/>
            <person name="Gough J."/>
            <person name="Frith M.C."/>
            <person name="Maeda N."/>
            <person name="Oyama R."/>
            <person name="Ravasi T."/>
            <person name="Lenhard B."/>
            <person name="Wells C."/>
            <person name="Kodzius R."/>
            <person name="Shimokawa K."/>
            <person name="Bajic V.B."/>
            <person name="Brenner S.E."/>
            <person name="Batalov S."/>
            <person name="Forrest A.R."/>
            <person name="Zavolan M."/>
            <person name="Davis M.J."/>
            <person name="Wilming L.G."/>
            <person name="Aidinis V."/>
            <person name="Allen J.E."/>
            <person name="Ambesi-Impiombato A."/>
            <person name="Apweiler R."/>
            <person name="Aturaliya R.N."/>
            <person name="Bailey T.L."/>
            <person name="Bansal M."/>
            <person name="Baxter L."/>
            <person name="Beisel K.W."/>
            <person name="Bersano T."/>
            <person name="Bono H."/>
            <person name="Chalk A.M."/>
            <person name="Chiu K.P."/>
            <person name="Choudhary V."/>
            <person name="Christoffels A."/>
            <person name="Clutterbuck D.R."/>
            <person name="Crowe M.L."/>
            <person name="Dalla E."/>
            <person name="Dalrymple B.P."/>
            <person name="de Bono B."/>
            <person name="Della Gatta G."/>
            <person name="di Bernardo D."/>
            <person name="Down T."/>
            <person name="Engstrom P."/>
            <person name="Fagiolini M."/>
            <person name="Faulkner G."/>
            <person name="Fletcher C.F."/>
            <person name="Fukushima T."/>
            <person name="Furuno M."/>
            <person name="Futaki S."/>
            <person name="Gariboldi M."/>
            <person name="Georgii-Hemming P."/>
            <person name="Gingeras T.R."/>
            <person name="Gojobori T."/>
            <person name="Green R.E."/>
            <person name="Gustincich S."/>
            <person name="Harbers M."/>
            <person name="Hayashi Y."/>
            <person name="Hensch T.K."/>
            <person name="Hirokawa N."/>
            <person name="Hill D."/>
            <person name="Huminiecki L."/>
            <person name="Iacono M."/>
            <person name="Ikeo K."/>
            <person name="Iwama A."/>
            <person name="Ishikawa T."/>
            <person name="Jakt M."/>
            <person name="Kanapin A."/>
            <person name="Katoh M."/>
            <person name="Kawasawa Y."/>
            <person name="Kelso J."/>
            <person name="Kitamura H."/>
            <person name="Kitano H."/>
            <person name="Kollias G."/>
            <person name="Krishnan S.P."/>
            <person name="Kruger A."/>
            <person name="Kummerfeld S.K."/>
            <person name="Kurochkin I.V."/>
            <person name="Lareau L.F."/>
            <person name="Lazarevic D."/>
            <person name="Lipovich L."/>
            <person name="Liu J."/>
            <person name="Liuni S."/>
            <person name="McWilliam S."/>
            <person name="Madan Babu M."/>
            <person name="Madera M."/>
            <person name="Marchionni L."/>
            <person name="Matsuda H."/>
            <person name="Matsuzawa S."/>
            <person name="Miki H."/>
            <person name="Mignone F."/>
            <person name="Miyake S."/>
            <person name="Morris K."/>
            <person name="Mottagui-Tabar S."/>
            <person name="Mulder N."/>
            <person name="Nakano N."/>
            <person name="Nakauchi H."/>
            <person name="Ng P."/>
            <person name="Nilsson R."/>
            <person name="Nishiguchi S."/>
            <person name="Nishikawa S."/>
            <person name="Nori F."/>
            <person name="Ohara O."/>
            <person name="Okazaki Y."/>
            <person name="Orlando V."/>
            <person name="Pang K.C."/>
            <person name="Pavan W.J."/>
            <person name="Pavesi G."/>
            <person name="Pesole G."/>
            <person name="Petrovsky N."/>
            <person name="Piazza S."/>
            <person name="Reed J."/>
            <person name="Reid J.F."/>
            <person name="Ring B.Z."/>
            <person name="Ringwald M."/>
            <person name="Rost B."/>
            <person name="Ruan Y."/>
            <person name="Salzberg S.L."/>
            <person name="Sandelin A."/>
            <person name="Schneider C."/>
            <person name="Schoenbach C."/>
            <person name="Sekiguchi K."/>
            <person name="Semple C.A."/>
            <person name="Seno S."/>
            <person name="Sessa L."/>
            <person name="Sheng Y."/>
            <person name="Shibata Y."/>
            <person name="Shimada H."/>
            <person name="Shimada K."/>
            <person name="Silva D."/>
            <person name="Sinclair B."/>
            <person name="Sperling S."/>
            <person name="Stupka E."/>
            <person name="Sugiura K."/>
            <person name="Sultana R."/>
            <person name="Takenaka Y."/>
            <person name="Taki K."/>
            <person name="Tammoja K."/>
            <person name="Tan S.L."/>
            <person name="Tang S."/>
            <person name="Taylor M.S."/>
            <person name="Tegner J."/>
            <person name="Teichmann S.A."/>
            <person name="Ueda H.R."/>
            <person name="van Nimwegen E."/>
            <person name="Verardo R."/>
            <person name="Wei C.L."/>
            <person name="Yagi K."/>
            <person name="Yamanishi H."/>
            <person name="Zabarovsky E."/>
            <person name="Zhu S."/>
            <person name="Zimmer A."/>
            <person name="Hide W."/>
            <person name="Bult C."/>
            <person name="Grimmond S.M."/>
            <person name="Teasdale R.D."/>
            <person name="Liu E.T."/>
            <person name="Brusic V."/>
            <person name="Quackenbush J."/>
            <person name="Wahlestedt C."/>
            <person name="Mattick J.S."/>
            <person name="Hume D.A."/>
            <person name="Kai C."/>
            <person name="Sasaki D."/>
            <person name="Tomaru Y."/>
            <person name="Fukuda S."/>
            <person name="Kanamori-Katayama M."/>
            <person name="Suzuki M."/>
            <person name="Aoki J."/>
            <person name="Arakawa T."/>
            <person name="Iida J."/>
            <person name="Imamura K."/>
            <person name="Itoh M."/>
            <person name="Kato T."/>
            <person name="Kawaji H."/>
            <person name="Kawagashira N."/>
            <person name="Kawashima T."/>
            <person name="Kojima M."/>
            <person name="Kondo S."/>
            <person name="Konno H."/>
            <person name="Nakano K."/>
            <person name="Ninomiya N."/>
            <person name="Nishio T."/>
            <person name="Okada M."/>
            <person name="Plessy C."/>
            <person name="Shibata K."/>
            <person name="Shiraki T."/>
            <person name="Suzuki S."/>
            <person name="Tagami M."/>
            <person name="Waki K."/>
            <person name="Watahiki A."/>
            <person name="Okamura-Oho Y."/>
            <person name="Suzuki H."/>
            <person name="Kawai J."/>
            <person name="Hayashizaki Y."/>
        </authorList>
    </citation>
    <scope>NUCLEOTIDE SEQUENCE [LARGE SCALE MRNA] (ISOFORM 1)</scope>
    <source>
        <strain>C57BL/6J</strain>
        <tissue>Testis</tissue>
    </source>
</reference>
<reference key="3">
    <citation type="journal article" date="2004" name="Genome Res.">
        <title>The status, quality, and expansion of the NIH full-length cDNA project: the Mammalian Gene Collection (MGC).</title>
        <authorList>
            <consortium name="The MGC Project Team"/>
        </authorList>
    </citation>
    <scope>NUCLEOTIDE SEQUENCE [LARGE SCALE MRNA] (ISOFORM 2)</scope>
</reference>
<comment type="function">
    <text>Tyrosine-protein phosphatase targeted to sites of actin polymerization in response of varied extracellular stimuli. Has tyrosine phosphatase activity towards various tyrosyl phosphorylated substrates.</text>
</comment>
<comment type="catalytic activity">
    <reaction evidence="4 6">
        <text>O-phospho-L-tyrosyl-[protein] + H2O = L-tyrosyl-[protein] + phosphate</text>
        <dbReference type="Rhea" id="RHEA:10684"/>
        <dbReference type="Rhea" id="RHEA-COMP:10136"/>
        <dbReference type="Rhea" id="RHEA-COMP:20101"/>
        <dbReference type="ChEBI" id="CHEBI:15377"/>
        <dbReference type="ChEBI" id="CHEBI:43474"/>
        <dbReference type="ChEBI" id="CHEBI:46858"/>
        <dbReference type="ChEBI" id="CHEBI:61978"/>
        <dbReference type="EC" id="3.1.3.48"/>
    </reaction>
</comment>
<comment type="subcellular location">
    <subcellularLocation>
        <location evidence="1">Nucleus</location>
    </subcellularLocation>
    <subcellularLocation>
        <location evidence="1">Cytoplasm</location>
    </subcellularLocation>
    <subcellularLocation>
        <location evidence="1">Cytoplasm</location>
        <location evidence="1">Cytoskeleton</location>
        <location evidence="1">Microtubule organizing center</location>
        <location evidence="1">Centrosome</location>
    </subcellularLocation>
    <text evidence="1">Colocalizes with the microtubule-organizing center and intracellular membrane compartments.</text>
</comment>
<comment type="alternative products">
    <event type="alternative splicing"/>
    <isoform>
        <id>O55082-1</id>
        <name>1</name>
        <sequence type="displayed"/>
    </isoform>
    <isoform>
        <id>O55082-2</id>
        <name>2</name>
        <sequence type="described" ref="VSP_027074 VSP_027075"/>
    </isoform>
</comment>
<comment type="tissue specificity">
    <text evidence="6">Testis-specific. Specifically expressed in testicular germ cells that undergo meiosis (at protein level).</text>
</comment>
<comment type="developmental stage">
    <text evidence="6">Detected between 2 and 3 weeks after birth, in parallel with the onset of meiosis.</text>
</comment>
<comment type="similarity">
    <text evidence="8">Belongs to the protein-tyrosine phosphatase family. Non-receptor class subfamily.</text>
</comment>
<keyword id="KW-0025">Alternative splicing</keyword>
<keyword id="KW-0963">Cytoplasm</keyword>
<keyword id="KW-0206">Cytoskeleton</keyword>
<keyword id="KW-0378">Hydrolase</keyword>
<keyword id="KW-0493">Microtubule</keyword>
<keyword id="KW-0539">Nucleus</keyword>
<keyword id="KW-0597">Phosphoprotein</keyword>
<keyword id="KW-0904">Protein phosphatase</keyword>
<keyword id="KW-1185">Reference proteome</keyword>
<feature type="chain" id="PRO_0000295756" description="Tyrosine-protein phosphatase non-receptor type 20">
    <location>
        <begin position="1"/>
        <end position="426"/>
    </location>
</feature>
<feature type="domain" description="Tyrosine-protein phosphatase" evidence="3">
    <location>
        <begin position="165"/>
        <end position="418"/>
    </location>
</feature>
<feature type="region of interest" description="Disordered" evidence="5">
    <location>
        <begin position="1"/>
        <end position="58"/>
    </location>
</feature>
<feature type="region of interest" description="Disordered" evidence="5">
    <location>
        <begin position="95"/>
        <end position="124"/>
    </location>
</feature>
<feature type="compositionally biased region" description="Basic residues" evidence="5">
    <location>
        <begin position="1"/>
        <end position="10"/>
    </location>
</feature>
<feature type="compositionally biased region" description="Low complexity" evidence="5">
    <location>
        <begin position="21"/>
        <end position="35"/>
    </location>
</feature>
<feature type="compositionally biased region" description="Polar residues" evidence="5">
    <location>
        <begin position="95"/>
        <end position="117"/>
    </location>
</feature>
<feature type="active site" description="Phosphocysteine intermediate" evidence="3 4">
    <location>
        <position position="359"/>
    </location>
</feature>
<feature type="binding site" evidence="1">
    <location>
        <position position="329"/>
    </location>
    <ligand>
        <name>substrate</name>
    </ligand>
</feature>
<feature type="binding site" evidence="1">
    <location>
        <begin position="359"/>
        <end position="365"/>
    </location>
    <ligand>
        <name>substrate</name>
    </ligand>
</feature>
<feature type="binding site" evidence="1">
    <location>
        <position position="403"/>
    </location>
    <ligand>
        <name>substrate</name>
    </ligand>
</feature>
<feature type="modified residue" description="Phosphoserine" evidence="2">
    <location>
        <position position="76"/>
    </location>
</feature>
<feature type="modified residue" description="Phosphoserine" evidence="2">
    <location>
        <position position="127"/>
    </location>
</feature>
<feature type="splice variant" id="VSP_027074" description="In isoform 2." evidence="7">
    <original>TETSVSEKELTQ</original>
    <variation>DIYKVSDTWNIY</variation>
    <location>
        <begin position="122"/>
        <end position="133"/>
    </location>
</feature>
<feature type="splice variant" id="VSP_027075" description="In isoform 2." evidence="7">
    <location>
        <begin position="134"/>
        <end position="426"/>
    </location>
</feature>
<protein>
    <recommendedName>
        <fullName>Tyrosine-protein phosphatase non-receptor type 20</fullName>
        <ecNumber>3.1.3.48</ecNumber>
    </recommendedName>
    <alternativeName>
        <fullName>Testis-specific tyrosine phosphatase</fullName>
    </alternativeName>
</protein>
<gene>
    <name type="primary">Ptpn20</name>
    <name type="synonym">Typ</name>
</gene>
<proteinExistence type="evidence at protein level"/>
<evidence type="ECO:0000250" key="1"/>
<evidence type="ECO:0000250" key="2">
    <source>
        <dbReference type="UniProtKB" id="A1L1L3"/>
    </source>
</evidence>
<evidence type="ECO:0000255" key="3">
    <source>
        <dbReference type="PROSITE-ProRule" id="PRU00160"/>
    </source>
</evidence>
<evidence type="ECO:0000255" key="4">
    <source>
        <dbReference type="PROSITE-ProRule" id="PRU10044"/>
    </source>
</evidence>
<evidence type="ECO:0000256" key="5">
    <source>
        <dbReference type="SAM" id="MobiDB-lite"/>
    </source>
</evidence>
<evidence type="ECO:0000269" key="6">
    <source>
    </source>
</evidence>
<evidence type="ECO:0000303" key="7">
    <source>
    </source>
</evidence>
<evidence type="ECO:0000305" key="8"/>